<name>OBG_GEOKA</name>
<reference key="1">
    <citation type="journal article" date="2004" name="Nucleic Acids Res.">
        <title>Thermoadaptation trait revealed by the genome sequence of thermophilic Geobacillus kaustophilus.</title>
        <authorList>
            <person name="Takami H."/>
            <person name="Takaki Y."/>
            <person name="Chee G.-J."/>
            <person name="Nishi S."/>
            <person name="Shimamura S."/>
            <person name="Suzuki H."/>
            <person name="Matsui S."/>
            <person name="Uchiyama I."/>
        </authorList>
    </citation>
    <scope>NUCLEOTIDE SEQUENCE [LARGE SCALE GENOMIC DNA]</scope>
    <source>
        <strain>HTA426</strain>
    </source>
</reference>
<protein>
    <recommendedName>
        <fullName evidence="1">GTPase Obg</fullName>
        <ecNumber evidence="1">3.6.5.-</ecNumber>
    </recommendedName>
    <alternativeName>
        <fullName evidence="1">GTP-binding protein Obg</fullName>
    </alternativeName>
</protein>
<comment type="function">
    <text evidence="1">An essential GTPase which binds GTP, GDP and possibly (p)ppGpp with moderate affinity, with high nucleotide exchange rates and a fairly low GTP hydrolysis rate. Plays a role in control of the cell cycle, stress response, ribosome biogenesis and in those bacteria that undergo differentiation, in morphogenesis control.</text>
</comment>
<comment type="cofactor">
    <cofactor evidence="1">
        <name>Mg(2+)</name>
        <dbReference type="ChEBI" id="CHEBI:18420"/>
    </cofactor>
</comment>
<comment type="subunit">
    <text evidence="1">Monomer.</text>
</comment>
<comment type="subcellular location">
    <subcellularLocation>
        <location evidence="1">Cytoplasm</location>
    </subcellularLocation>
</comment>
<comment type="similarity">
    <text evidence="1">Belongs to the TRAFAC class OBG-HflX-like GTPase superfamily. OBG GTPase family.</text>
</comment>
<evidence type="ECO:0000255" key="1">
    <source>
        <dbReference type="HAMAP-Rule" id="MF_01454"/>
    </source>
</evidence>
<evidence type="ECO:0000255" key="2">
    <source>
        <dbReference type="PROSITE-ProRule" id="PRU01229"/>
    </source>
</evidence>
<evidence type="ECO:0000255" key="3">
    <source>
        <dbReference type="PROSITE-ProRule" id="PRU01231"/>
    </source>
</evidence>
<keyword id="KW-0963">Cytoplasm</keyword>
<keyword id="KW-0342">GTP-binding</keyword>
<keyword id="KW-0378">Hydrolase</keyword>
<keyword id="KW-0460">Magnesium</keyword>
<keyword id="KW-0479">Metal-binding</keyword>
<keyword id="KW-0547">Nucleotide-binding</keyword>
<keyword id="KW-1185">Reference proteome</keyword>
<sequence length="432" mass="47797">MFVDQVKIYVKGGDGGNGMVAFRREKYVPKGGPAGGDGGKGGDVVFVVDEGLRTLMDFRYQRHFKAPRGENGMSKNQHGKNAEDLIVKVPPGTVVIDADTNEVLADLTEAGQRFVVAKGGRGGRGNTRFATASNPAPEIAENGEPGEERNIILELKLLADVGLVGFPSVGKSTLLSVVSAARPKIAEYHFTTLVPNLGVVETEDGRSFVMADLPGLIEGAHQGVGLGHQFLRHIERTRVIVHVIDMAAVEGRDPYNDYLVINEELKQYNLRLTERPQIVAANKMDMPNAEENLRRFKEKVGDAVPVFPISAATRQGVRELLFAIADLLETTPEFPLHEREDPAVQRVVYKYEKEEPPFTITRASDGAFILAGDKIEKLFKMTDFSREESVRRFARQLKAMGVDDALRERGAKDGDTIRLLDYEFEFVDDWDE</sequence>
<gene>
    <name evidence="1" type="primary">obg</name>
    <name type="ordered locus">GK2606</name>
</gene>
<organism>
    <name type="scientific">Geobacillus kaustophilus (strain HTA426)</name>
    <dbReference type="NCBI Taxonomy" id="235909"/>
    <lineage>
        <taxon>Bacteria</taxon>
        <taxon>Bacillati</taxon>
        <taxon>Bacillota</taxon>
        <taxon>Bacilli</taxon>
        <taxon>Bacillales</taxon>
        <taxon>Anoxybacillaceae</taxon>
        <taxon>Geobacillus</taxon>
        <taxon>Geobacillus thermoleovorans group</taxon>
    </lineage>
</organism>
<feature type="chain" id="PRO_0000385948" description="GTPase Obg">
    <location>
        <begin position="1"/>
        <end position="432"/>
    </location>
</feature>
<feature type="domain" description="Obg" evidence="3">
    <location>
        <begin position="1"/>
        <end position="158"/>
    </location>
</feature>
<feature type="domain" description="OBG-type G" evidence="1">
    <location>
        <begin position="159"/>
        <end position="329"/>
    </location>
</feature>
<feature type="domain" description="OCT" evidence="2">
    <location>
        <begin position="350"/>
        <end position="428"/>
    </location>
</feature>
<feature type="binding site" evidence="1">
    <location>
        <begin position="165"/>
        <end position="172"/>
    </location>
    <ligand>
        <name>GTP</name>
        <dbReference type="ChEBI" id="CHEBI:37565"/>
    </ligand>
</feature>
<feature type="binding site" evidence="1">
    <location>
        <position position="172"/>
    </location>
    <ligand>
        <name>Mg(2+)</name>
        <dbReference type="ChEBI" id="CHEBI:18420"/>
    </ligand>
</feature>
<feature type="binding site" evidence="1">
    <location>
        <begin position="190"/>
        <end position="194"/>
    </location>
    <ligand>
        <name>GTP</name>
        <dbReference type="ChEBI" id="CHEBI:37565"/>
    </ligand>
</feature>
<feature type="binding site" evidence="1">
    <location>
        <position position="192"/>
    </location>
    <ligand>
        <name>Mg(2+)</name>
        <dbReference type="ChEBI" id="CHEBI:18420"/>
    </ligand>
</feature>
<feature type="binding site" evidence="1">
    <location>
        <begin position="212"/>
        <end position="215"/>
    </location>
    <ligand>
        <name>GTP</name>
        <dbReference type="ChEBI" id="CHEBI:37565"/>
    </ligand>
</feature>
<feature type="binding site" evidence="1">
    <location>
        <begin position="282"/>
        <end position="285"/>
    </location>
    <ligand>
        <name>GTP</name>
        <dbReference type="ChEBI" id="CHEBI:37565"/>
    </ligand>
</feature>
<feature type="binding site" evidence="1">
    <location>
        <begin position="310"/>
        <end position="312"/>
    </location>
    <ligand>
        <name>GTP</name>
        <dbReference type="ChEBI" id="CHEBI:37565"/>
    </ligand>
</feature>
<dbReference type="EC" id="3.6.5.-" evidence="1"/>
<dbReference type="EMBL" id="BA000043">
    <property type="protein sequence ID" value="BAD76891.1"/>
    <property type="molecule type" value="Genomic_DNA"/>
</dbReference>
<dbReference type="SMR" id="Q5KWP5"/>
<dbReference type="STRING" id="235909.GK2606"/>
<dbReference type="KEGG" id="gka:GK2606"/>
<dbReference type="eggNOG" id="COG0536">
    <property type="taxonomic scope" value="Bacteria"/>
</dbReference>
<dbReference type="HOGENOM" id="CLU_011747_2_1_9"/>
<dbReference type="Proteomes" id="UP000001172">
    <property type="component" value="Chromosome"/>
</dbReference>
<dbReference type="GO" id="GO:0005737">
    <property type="term" value="C:cytoplasm"/>
    <property type="evidence" value="ECO:0007669"/>
    <property type="project" value="UniProtKB-SubCell"/>
</dbReference>
<dbReference type="GO" id="GO:0005525">
    <property type="term" value="F:GTP binding"/>
    <property type="evidence" value="ECO:0007669"/>
    <property type="project" value="UniProtKB-UniRule"/>
</dbReference>
<dbReference type="GO" id="GO:0003924">
    <property type="term" value="F:GTPase activity"/>
    <property type="evidence" value="ECO:0007669"/>
    <property type="project" value="UniProtKB-UniRule"/>
</dbReference>
<dbReference type="GO" id="GO:0000287">
    <property type="term" value="F:magnesium ion binding"/>
    <property type="evidence" value="ECO:0007669"/>
    <property type="project" value="InterPro"/>
</dbReference>
<dbReference type="GO" id="GO:0042254">
    <property type="term" value="P:ribosome biogenesis"/>
    <property type="evidence" value="ECO:0007669"/>
    <property type="project" value="UniProtKB-UniRule"/>
</dbReference>
<dbReference type="CDD" id="cd01898">
    <property type="entry name" value="Obg"/>
    <property type="match status" value="1"/>
</dbReference>
<dbReference type="FunFam" id="2.70.210.12:FF:000001">
    <property type="entry name" value="GTPase Obg"/>
    <property type="match status" value="1"/>
</dbReference>
<dbReference type="FunFam" id="3.40.50.300:FF:000515">
    <property type="entry name" value="GTPase Obg"/>
    <property type="match status" value="1"/>
</dbReference>
<dbReference type="Gene3D" id="3.30.300.350">
    <property type="entry name" value="GTP-binding protein OBG, C-terminal domain"/>
    <property type="match status" value="1"/>
</dbReference>
<dbReference type="Gene3D" id="2.70.210.12">
    <property type="entry name" value="GTP1/OBG domain"/>
    <property type="match status" value="1"/>
</dbReference>
<dbReference type="Gene3D" id="3.40.50.300">
    <property type="entry name" value="P-loop containing nucleotide triphosphate hydrolases"/>
    <property type="match status" value="1"/>
</dbReference>
<dbReference type="HAMAP" id="MF_01454">
    <property type="entry name" value="GTPase_Obg"/>
    <property type="match status" value="1"/>
</dbReference>
<dbReference type="InterPro" id="IPR031167">
    <property type="entry name" value="G_OBG"/>
</dbReference>
<dbReference type="InterPro" id="IPR006073">
    <property type="entry name" value="GTP-bd"/>
</dbReference>
<dbReference type="InterPro" id="IPR014100">
    <property type="entry name" value="GTP-bd_Obg/CgtA"/>
</dbReference>
<dbReference type="InterPro" id="IPR036346">
    <property type="entry name" value="GTP-bd_prot_GTP1/OBG_C_sf"/>
</dbReference>
<dbReference type="InterPro" id="IPR006074">
    <property type="entry name" value="GTP1-OBG_CS"/>
</dbReference>
<dbReference type="InterPro" id="IPR006169">
    <property type="entry name" value="GTP1_OBG_dom"/>
</dbReference>
<dbReference type="InterPro" id="IPR036726">
    <property type="entry name" value="GTP1_OBG_dom_sf"/>
</dbReference>
<dbReference type="InterPro" id="IPR045086">
    <property type="entry name" value="OBG_GTPase"/>
</dbReference>
<dbReference type="InterPro" id="IPR015349">
    <property type="entry name" value="OCT_dom"/>
</dbReference>
<dbReference type="InterPro" id="IPR027417">
    <property type="entry name" value="P-loop_NTPase"/>
</dbReference>
<dbReference type="InterPro" id="IPR005225">
    <property type="entry name" value="Small_GTP-bd"/>
</dbReference>
<dbReference type="NCBIfam" id="TIGR02729">
    <property type="entry name" value="Obg_CgtA"/>
    <property type="match status" value="1"/>
</dbReference>
<dbReference type="NCBIfam" id="TIGR03595">
    <property type="entry name" value="Obg_CgtA_exten"/>
    <property type="match status" value="1"/>
</dbReference>
<dbReference type="NCBIfam" id="NF008954">
    <property type="entry name" value="PRK12296.1"/>
    <property type="match status" value="1"/>
</dbReference>
<dbReference type="NCBIfam" id="NF008955">
    <property type="entry name" value="PRK12297.1"/>
    <property type="match status" value="1"/>
</dbReference>
<dbReference type="NCBIfam" id="NF008956">
    <property type="entry name" value="PRK12299.1"/>
    <property type="match status" value="1"/>
</dbReference>
<dbReference type="NCBIfam" id="TIGR00231">
    <property type="entry name" value="small_GTP"/>
    <property type="match status" value="1"/>
</dbReference>
<dbReference type="PANTHER" id="PTHR11702">
    <property type="entry name" value="DEVELOPMENTALLY REGULATED GTP-BINDING PROTEIN-RELATED"/>
    <property type="match status" value="1"/>
</dbReference>
<dbReference type="PANTHER" id="PTHR11702:SF31">
    <property type="entry name" value="MITOCHONDRIAL RIBOSOME-ASSOCIATED GTPASE 2"/>
    <property type="match status" value="1"/>
</dbReference>
<dbReference type="Pfam" id="PF09269">
    <property type="entry name" value="DUF1967"/>
    <property type="match status" value="1"/>
</dbReference>
<dbReference type="Pfam" id="PF01018">
    <property type="entry name" value="GTP1_OBG"/>
    <property type="match status" value="1"/>
</dbReference>
<dbReference type="Pfam" id="PF01926">
    <property type="entry name" value="MMR_HSR1"/>
    <property type="match status" value="1"/>
</dbReference>
<dbReference type="PIRSF" id="PIRSF002401">
    <property type="entry name" value="GTP_bd_Obg/CgtA"/>
    <property type="match status" value="1"/>
</dbReference>
<dbReference type="PRINTS" id="PR00326">
    <property type="entry name" value="GTP1OBG"/>
</dbReference>
<dbReference type="SUPFAM" id="SSF102741">
    <property type="entry name" value="Obg GTP-binding protein C-terminal domain"/>
    <property type="match status" value="1"/>
</dbReference>
<dbReference type="SUPFAM" id="SSF82051">
    <property type="entry name" value="Obg GTP-binding protein N-terminal domain"/>
    <property type="match status" value="1"/>
</dbReference>
<dbReference type="SUPFAM" id="SSF52540">
    <property type="entry name" value="P-loop containing nucleoside triphosphate hydrolases"/>
    <property type="match status" value="1"/>
</dbReference>
<dbReference type="PROSITE" id="PS51710">
    <property type="entry name" value="G_OBG"/>
    <property type="match status" value="1"/>
</dbReference>
<dbReference type="PROSITE" id="PS00905">
    <property type="entry name" value="GTP1_OBG"/>
    <property type="match status" value="1"/>
</dbReference>
<dbReference type="PROSITE" id="PS51883">
    <property type="entry name" value="OBG"/>
    <property type="match status" value="1"/>
</dbReference>
<dbReference type="PROSITE" id="PS51881">
    <property type="entry name" value="OCT"/>
    <property type="match status" value="1"/>
</dbReference>
<accession>Q5KWP5</accession>
<proteinExistence type="inferred from homology"/>